<proteinExistence type="evidence at transcript level"/>
<keyword id="KW-0204">Cytolysis</keyword>
<keyword id="KW-1061">Dermonecrotic toxin</keyword>
<keyword id="KW-1015">Disulfide bond</keyword>
<keyword id="KW-0354">Hemolysis</keyword>
<keyword id="KW-0442">Lipid degradation</keyword>
<keyword id="KW-0443">Lipid metabolism</keyword>
<keyword id="KW-0456">Lyase</keyword>
<keyword id="KW-0460">Magnesium</keyword>
<keyword id="KW-0479">Metal-binding</keyword>
<keyword id="KW-0964">Secreted</keyword>
<keyword id="KW-0800">Toxin</keyword>
<evidence type="ECO:0000250" key="1">
    <source>
        <dbReference type="UniProtKB" id="A0A0D4WTV1"/>
    </source>
</evidence>
<evidence type="ECO:0000250" key="2">
    <source>
        <dbReference type="UniProtKB" id="A0A0D4WV12"/>
    </source>
</evidence>
<evidence type="ECO:0000250" key="3">
    <source>
        <dbReference type="UniProtKB" id="P0CE80"/>
    </source>
</evidence>
<evidence type="ECO:0000250" key="4">
    <source>
        <dbReference type="UniProtKB" id="Q4ZFU2"/>
    </source>
</evidence>
<evidence type="ECO:0000250" key="5">
    <source>
        <dbReference type="UniProtKB" id="Q8I914"/>
    </source>
</evidence>
<evidence type="ECO:0000303" key="6">
    <source>
    </source>
</evidence>
<evidence type="ECO:0000305" key="7"/>
<evidence type="ECO:0000305" key="8">
    <source>
    </source>
</evidence>
<reference key="1">
    <citation type="journal article" date="2009" name="Mol. Biol. Evol.">
        <title>Molecular evolution, functional variation, and proposed nomenclature of the gene family that includes sphingomyelinase D in sicariid spider venoms.</title>
        <authorList>
            <person name="Binford G.J."/>
            <person name="Bodner M.R."/>
            <person name="Cordes M.H."/>
            <person name="Baldwin K.L."/>
            <person name="Rynerson M.R."/>
            <person name="Burns S.N."/>
            <person name="Zobel-Thropp P.A."/>
        </authorList>
    </citation>
    <scope>NUCLEOTIDE SEQUENCE [MRNA]</scope>
    <scope>NOMENCLATURE</scope>
    <source>
        <tissue>Venom gland</tissue>
    </source>
</reference>
<sequence length="272" mass="30403">IMGHMVNSLAQIDEFVGLGSNSIETDVSFDKQANPEYTYHGIPCDCGRSCGHSTKFNDFLKGLRKATTPGDSKYHEKLILVVFDLKTGSLYDNQAYDAGTKLAKNLLQHYWNNGNNGGRAYIILSIPKLNHYKLITGFKETLKNEGHGDLLEKVGHGFSGNDDISEVQKTYNKAGVTGHVWQSDGITNCLLRGLSRVKAAVANRDSGSGIINKVYYWTVDKRSTTRDSLDAKVDGIMTNYPDITVEILNEDAYKKKFRIATYEDNPWETFKE</sequence>
<protein>
    <recommendedName>
        <fullName evidence="6">Dermonecrotic toxin LvSicTox-alphaIC1aiii</fullName>
        <ecNumber evidence="4">4.6.1.-</ecNumber>
    </recommendedName>
    <alternativeName>
        <fullName>Phospholipase D</fullName>
        <shortName>PLD</shortName>
    </alternativeName>
    <alternativeName>
        <fullName>Sphingomyelin phosphodiesterase D</fullName>
        <shortName>SMD</shortName>
        <shortName>SMase D</shortName>
        <shortName>Sphingomyelinase D</shortName>
    </alternativeName>
</protein>
<name>A1OA3_LOXVA</name>
<accession>C0JAZ3</accession>
<feature type="chain" id="PRO_0000392808" description="Dermonecrotic toxin LvSicTox-alphaIC1aiii">
    <location>
        <begin position="1" status="less than"/>
        <end position="272"/>
    </location>
</feature>
<feature type="active site" evidence="5">
    <location>
        <position position="4"/>
    </location>
</feature>
<feature type="active site" description="Nucleophile" evidence="5">
    <location>
        <position position="40"/>
    </location>
</feature>
<feature type="binding site" evidence="5">
    <location>
        <position position="24"/>
    </location>
    <ligand>
        <name>Mg(2+)</name>
        <dbReference type="ChEBI" id="CHEBI:18420"/>
    </ligand>
</feature>
<feature type="binding site" evidence="5">
    <location>
        <position position="26"/>
    </location>
    <ligand>
        <name>Mg(2+)</name>
        <dbReference type="ChEBI" id="CHEBI:18420"/>
    </ligand>
</feature>
<feature type="binding site" evidence="5">
    <location>
        <position position="84"/>
    </location>
    <ligand>
        <name>Mg(2+)</name>
        <dbReference type="ChEBI" id="CHEBI:18420"/>
    </ligand>
</feature>
<feature type="disulfide bond" evidence="3">
    <location>
        <begin position="44"/>
        <end position="50"/>
    </location>
</feature>
<feature type="disulfide bond" evidence="3">
    <location>
        <begin position="46"/>
        <end position="189"/>
    </location>
</feature>
<feature type="non-terminal residue">
    <location>
        <position position="1"/>
    </location>
</feature>
<organism>
    <name type="scientific">Loxosceles variegata</name>
    <name type="common">Recluse spider</name>
    <dbReference type="NCBI Taxonomy" id="571533"/>
    <lineage>
        <taxon>Eukaryota</taxon>
        <taxon>Metazoa</taxon>
        <taxon>Ecdysozoa</taxon>
        <taxon>Arthropoda</taxon>
        <taxon>Chelicerata</taxon>
        <taxon>Arachnida</taxon>
        <taxon>Araneae</taxon>
        <taxon>Araneomorphae</taxon>
        <taxon>Haplogynae</taxon>
        <taxon>Scytodoidea</taxon>
        <taxon>Sicariidae</taxon>
        <taxon>Loxosceles</taxon>
    </lineage>
</organism>
<dbReference type="EC" id="4.6.1.-" evidence="4"/>
<dbReference type="EMBL" id="FJ171428">
    <property type="protein sequence ID" value="ACN48924.2"/>
    <property type="molecule type" value="mRNA"/>
</dbReference>
<dbReference type="SMR" id="C0JAZ3"/>
<dbReference type="GO" id="GO:0005576">
    <property type="term" value="C:extracellular region"/>
    <property type="evidence" value="ECO:0007669"/>
    <property type="project" value="UniProtKB-SubCell"/>
</dbReference>
<dbReference type="GO" id="GO:0016829">
    <property type="term" value="F:lyase activity"/>
    <property type="evidence" value="ECO:0007669"/>
    <property type="project" value="UniProtKB-KW"/>
</dbReference>
<dbReference type="GO" id="GO:0046872">
    <property type="term" value="F:metal ion binding"/>
    <property type="evidence" value="ECO:0007669"/>
    <property type="project" value="UniProtKB-KW"/>
</dbReference>
<dbReference type="GO" id="GO:0008081">
    <property type="term" value="F:phosphoric diester hydrolase activity"/>
    <property type="evidence" value="ECO:0007669"/>
    <property type="project" value="InterPro"/>
</dbReference>
<dbReference type="GO" id="GO:0090729">
    <property type="term" value="F:toxin activity"/>
    <property type="evidence" value="ECO:0007669"/>
    <property type="project" value="UniProtKB-KW"/>
</dbReference>
<dbReference type="GO" id="GO:0031640">
    <property type="term" value="P:killing of cells of another organism"/>
    <property type="evidence" value="ECO:0007669"/>
    <property type="project" value="UniProtKB-KW"/>
</dbReference>
<dbReference type="GO" id="GO:0016042">
    <property type="term" value="P:lipid catabolic process"/>
    <property type="evidence" value="ECO:0007669"/>
    <property type="project" value="UniProtKB-KW"/>
</dbReference>
<dbReference type="CDD" id="cd08576">
    <property type="entry name" value="GDPD_like_SMaseD_PLD"/>
    <property type="match status" value="1"/>
</dbReference>
<dbReference type="Gene3D" id="3.20.20.190">
    <property type="entry name" value="Phosphatidylinositol (PI) phosphodiesterase"/>
    <property type="match status" value="1"/>
</dbReference>
<dbReference type="InterPro" id="IPR017946">
    <property type="entry name" value="PLC-like_Pdiesterase_TIM-brl"/>
</dbReference>
<dbReference type="Pfam" id="PF13653">
    <property type="entry name" value="GDPD_2"/>
    <property type="match status" value="1"/>
</dbReference>
<dbReference type="SUPFAM" id="SSF51695">
    <property type="entry name" value="PLC-like phosphodiesterases"/>
    <property type="match status" value="1"/>
</dbReference>
<comment type="function">
    <text evidence="1 3">Dermonecrotic toxins cleave the phosphodiester linkage between the phosphate and headgroup of certain phospholipids (sphingolipid and lysolipid substrates), forming an alcohol (often choline) and a cyclic phosphate (By similarity). This toxin acts on sphingomyelin (SM) (By similarity). It may also act on ceramide phosphoethanolamine (CPE), lysophosphatidylcholine (LPC) and lysophosphatidylethanolamine (LPE), but not on lysophosphatidylserine (LPS), and lysophosphatidylglycerol (LPG) (By similarity). It acts by transphosphatidylation, releasing exclusively cyclic phosphate products as second products (By similarity). Induces dermonecrosis, hemolysis, increased vascular permeability, edema, inflammatory response, and platelet aggregation (By similarity).</text>
</comment>
<comment type="catalytic activity">
    <reaction evidence="1">
        <text>an N-(acyl)-sphingosylphosphocholine = an N-(acyl)-sphingosyl-1,3-cyclic phosphate + choline</text>
        <dbReference type="Rhea" id="RHEA:60652"/>
        <dbReference type="ChEBI" id="CHEBI:15354"/>
        <dbReference type="ChEBI" id="CHEBI:64583"/>
        <dbReference type="ChEBI" id="CHEBI:143892"/>
    </reaction>
</comment>
<comment type="catalytic activity">
    <reaction evidence="1">
        <text>an N-(acyl)-sphingosylphosphoethanolamine = an N-(acyl)-sphingosyl-1,3-cyclic phosphate + ethanolamine</text>
        <dbReference type="Rhea" id="RHEA:60648"/>
        <dbReference type="ChEBI" id="CHEBI:57603"/>
        <dbReference type="ChEBI" id="CHEBI:143891"/>
        <dbReference type="ChEBI" id="CHEBI:143892"/>
    </reaction>
</comment>
<comment type="catalytic activity">
    <reaction evidence="1">
        <text>a 1-acyl-sn-glycero-3-phosphocholine = a 1-acyl-sn-glycero-2,3-cyclic phosphate + choline</text>
        <dbReference type="Rhea" id="RHEA:60700"/>
        <dbReference type="ChEBI" id="CHEBI:15354"/>
        <dbReference type="ChEBI" id="CHEBI:58168"/>
        <dbReference type="ChEBI" id="CHEBI:143947"/>
    </reaction>
</comment>
<comment type="catalytic activity">
    <reaction evidence="1">
        <text>a 1-acyl-sn-glycero-3-phosphoethanolamine = a 1-acyl-sn-glycero-2,3-cyclic phosphate + ethanolamine</text>
        <dbReference type="Rhea" id="RHEA:60704"/>
        <dbReference type="ChEBI" id="CHEBI:57603"/>
        <dbReference type="ChEBI" id="CHEBI:64381"/>
        <dbReference type="ChEBI" id="CHEBI:143947"/>
    </reaction>
</comment>
<comment type="cofactor">
    <cofactor evidence="5">
        <name>Mg(2+)</name>
        <dbReference type="ChEBI" id="CHEBI:18420"/>
    </cofactor>
    <text evidence="5">Binds 1 Mg(2+) ion per subunit.</text>
</comment>
<comment type="subcellular location">
    <subcellularLocation>
        <location evidence="8">Secreted</location>
    </subcellularLocation>
</comment>
<comment type="tissue specificity">
    <text evidence="8">Expressed by the venom gland.</text>
</comment>
<comment type="similarity">
    <text evidence="7">Belongs to the arthropod phospholipase D family. Class II subfamily.</text>
</comment>
<comment type="caution">
    <text evidence="1 2 4">The most common activity assay for dermonecrotic toxins detects enzymatic activity by monitoring choline release from substrate. Liberation of choline from sphingomyelin (SM) or lysophosphatidylcholine (LPC) is commonly assumed to result from substrate hydrolysis, giving either ceramide-1-phosphate (C1P) or lysophosphatidic acid (LPA), respectively, as a second product. However, two studies from Lajoie and colleagues (2013 and 2015) report the observation of exclusive formation of cyclic phosphate products as second products, resulting from intramolecular transphosphatidylation. Cyclic phosphates have vastly different biological properties from their monoester counterparts, and they may be relevant to the pathology of brown spider envenomation.</text>
</comment>